<dbReference type="EMBL" id="AE005174">
    <property type="protein sequence ID" value="AAG55212.1"/>
    <property type="molecule type" value="Genomic_DNA"/>
</dbReference>
<dbReference type="EMBL" id="BA000007">
    <property type="protein sequence ID" value="BAB34339.1"/>
    <property type="molecule type" value="Genomic_DNA"/>
</dbReference>
<dbReference type="PIR" id="D90743">
    <property type="entry name" value="D90743"/>
</dbReference>
<dbReference type="PIR" id="H85593">
    <property type="entry name" value="H85593"/>
</dbReference>
<dbReference type="RefSeq" id="NP_308943.1">
    <property type="nucleotide sequence ID" value="NC_002695.1"/>
</dbReference>
<dbReference type="RefSeq" id="WP_000497137.1">
    <property type="nucleotide sequence ID" value="NZ_VOAI01000006.1"/>
</dbReference>
<dbReference type="STRING" id="155864.Z1062"/>
<dbReference type="GeneID" id="917658"/>
<dbReference type="GeneID" id="93776586"/>
<dbReference type="KEGG" id="ece:Z1062"/>
<dbReference type="KEGG" id="ecs:ECs_0916"/>
<dbReference type="PATRIC" id="fig|386585.9.peg.1032"/>
<dbReference type="eggNOG" id="ENOG5030IAT">
    <property type="taxonomic scope" value="Bacteria"/>
</dbReference>
<dbReference type="HOGENOM" id="CLU_161265_0_0_6"/>
<dbReference type="OMA" id="NDHLRDN"/>
<dbReference type="Proteomes" id="UP000000558">
    <property type="component" value="Chromosome"/>
</dbReference>
<dbReference type="Proteomes" id="UP000002519">
    <property type="component" value="Chromosome"/>
</dbReference>
<dbReference type="InterPro" id="IPR020359">
    <property type="entry name" value="Biofilm_regulator_BssR"/>
</dbReference>
<dbReference type="NCBIfam" id="NF008959">
    <property type="entry name" value="PRK12302.1"/>
    <property type="match status" value="1"/>
</dbReference>
<dbReference type="Pfam" id="PF10799">
    <property type="entry name" value="YliH"/>
    <property type="match status" value="1"/>
</dbReference>
<organism>
    <name type="scientific">Escherichia coli O157:H7</name>
    <dbReference type="NCBI Taxonomy" id="83334"/>
    <lineage>
        <taxon>Bacteria</taxon>
        <taxon>Pseudomonadati</taxon>
        <taxon>Pseudomonadota</taxon>
        <taxon>Gammaproteobacteria</taxon>
        <taxon>Enterobacterales</taxon>
        <taxon>Enterobacteriaceae</taxon>
        <taxon>Escherichia</taxon>
    </lineage>
</organism>
<name>BSSR_ECO57</name>
<protein>
    <recommendedName>
        <fullName>Biofilm regulator BssR</fullName>
    </recommendedName>
</protein>
<proteinExistence type="inferred from homology"/>
<keyword id="KW-1185">Reference proteome</keyword>
<sequence>MFVDRQRIDLLNRLIDARVDLAAYVQLRKAKGYMSVSESNHLRDNFFKLNRELHDKSLRLNLHLDQEEWSALHHAEEALATAAVCLMSGHHDCPTVITVNADKLENCLMSLTLSIQSLQKHAMLEKA</sequence>
<evidence type="ECO:0000250" key="1"/>
<reference key="1">
    <citation type="journal article" date="2001" name="Nature">
        <title>Genome sequence of enterohaemorrhagic Escherichia coli O157:H7.</title>
        <authorList>
            <person name="Perna N.T."/>
            <person name="Plunkett G. III"/>
            <person name="Burland V."/>
            <person name="Mau B."/>
            <person name="Glasner J.D."/>
            <person name="Rose D.J."/>
            <person name="Mayhew G.F."/>
            <person name="Evans P.S."/>
            <person name="Gregor J."/>
            <person name="Kirkpatrick H.A."/>
            <person name="Posfai G."/>
            <person name="Hackett J."/>
            <person name="Klink S."/>
            <person name="Boutin A."/>
            <person name="Shao Y."/>
            <person name="Miller L."/>
            <person name="Grotbeck E.J."/>
            <person name="Davis N.W."/>
            <person name="Lim A."/>
            <person name="Dimalanta E.T."/>
            <person name="Potamousis K."/>
            <person name="Apodaca J."/>
            <person name="Anantharaman T.S."/>
            <person name="Lin J."/>
            <person name="Yen G."/>
            <person name="Schwartz D.C."/>
            <person name="Welch R.A."/>
            <person name="Blattner F.R."/>
        </authorList>
    </citation>
    <scope>NUCLEOTIDE SEQUENCE [LARGE SCALE GENOMIC DNA]</scope>
    <source>
        <strain>O157:H7 / EDL933 / ATCC 700927 / EHEC</strain>
    </source>
</reference>
<reference key="2">
    <citation type="journal article" date="2001" name="DNA Res.">
        <title>Complete genome sequence of enterohemorrhagic Escherichia coli O157:H7 and genomic comparison with a laboratory strain K-12.</title>
        <authorList>
            <person name="Hayashi T."/>
            <person name="Makino K."/>
            <person name="Ohnishi M."/>
            <person name="Kurokawa K."/>
            <person name="Ishii K."/>
            <person name="Yokoyama K."/>
            <person name="Han C.-G."/>
            <person name="Ohtsubo E."/>
            <person name="Nakayama K."/>
            <person name="Murata T."/>
            <person name="Tanaka M."/>
            <person name="Tobe T."/>
            <person name="Iida T."/>
            <person name="Takami H."/>
            <person name="Honda T."/>
            <person name="Sasakawa C."/>
            <person name="Ogasawara N."/>
            <person name="Yasunaga T."/>
            <person name="Kuhara S."/>
            <person name="Shiba T."/>
            <person name="Hattori M."/>
            <person name="Shinagawa H."/>
        </authorList>
    </citation>
    <scope>NUCLEOTIDE SEQUENCE [LARGE SCALE GENOMIC DNA]</scope>
    <source>
        <strain>O157:H7 / Sakai / RIMD 0509952 / EHEC</strain>
    </source>
</reference>
<comment type="function">
    <text evidence="1">Represses biofilm formation in M9C glu and LB glu media but not in M9C and LB media. Seems to act as a global regulator of several genes involved in catabolite repression and stress response and regulation of the uptake and export of signaling pathways. Could be involved the regulation of indole as well as uptake and export of AI-2 through a cAMP-dependent pathway (By similarity).</text>
</comment>
<feature type="chain" id="PRO_0000168733" description="Biofilm regulator BssR">
    <location>
        <begin position="1"/>
        <end position="127"/>
    </location>
</feature>
<gene>
    <name type="primary">bssR</name>
    <name type="ordered locus">Z1062</name>
    <name type="ordered locus">ECs0916</name>
</gene>
<accession>P0AAY2</accession>
<accession>P75803</accession>